<keyword id="KW-0066">ATP synthesis</keyword>
<keyword id="KW-1003">Cell membrane</keyword>
<keyword id="KW-0139">CF(1)</keyword>
<keyword id="KW-0375">Hydrogen ion transport</keyword>
<keyword id="KW-0406">Ion transport</keyword>
<keyword id="KW-0472">Membrane</keyword>
<keyword id="KW-0813">Transport</keyword>
<protein>
    <recommendedName>
        <fullName evidence="1">ATP synthase epsilon chain</fullName>
    </recommendedName>
    <alternativeName>
        <fullName evidence="1">ATP synthase F1 sector epsilon subunit</fullName>
    </alternativeName>
    <alternativeName>
        <fullName evidence="1">F-ATPase epsilon subunit</fullName>
    </alternativeName>
</protein>
<gene>
    <name evidence="1" type="primary">atpC</name>
    <name type="ordered locus">CLH_0491</name>
</gene>
<proteinExistence type="inferred from homology"/>
<sequence>MADTFLLKIVTPDKDIFNGNIKRIFLRNSVGRLEILANHANMVTSTVSSIVEFTDAEGKDRKLFVSKGIASIFNNEMTIFSESAEFSDNIDLNRAEKAKERAEKRLLEGNKYDKERAELALLRSIERINLKKMN</sequence>
<accession>B2UZK1</accession>
<evidence type="ECO:0000255" key="1">
    <source>
        <dbReference type="HAMAP-Rule" id="MF_00530"/>
    </source>
</evidence>
<dbReference type="EMBL" id="CP001078">
    <property type="protein sequence ID" value="ACD53862.1"/>
    <property type="molecule type" value="Genomic_DNA"/>
</dbReference>
<dbReference type="RefSeq" id="WP_003371522.1">
    <property type="nucleotide sequence ID" value="NC_010723.1"/>
</dbReference>
<dbReference type="SMR" id="B2UZK1"/>
<dbReference type="KEGG" id="cbt:CLH_0491"/>
<dbReference type="HOGENOM" id="CLU_084338_1_1_9"/>
<dbReference type="GO" id="GO:0005886">
    <property type="term" value="C:plasma membrane"/>
    <property type="evidence" value="ECO:0007669"/>
    <property type="project" value="UniProtKB-SubCell"/>
</dbReference>
<dbReference type="GO" id="GO:0045259">
    <property type="term" value="C:proton-transporting ATP synthase complex"/>
    <property type="evidence" value="ECO:0007669"/>
    <property type="project" value="UniProtKB-KW"/>
</dbReference>
<dbReference type="GO" id="GO:0005524">
    <property type="term" value="F:ATP binding"/>
    <property type="evidence" value="ECO:0007669"/>
    <property type="project" value="UniProtKB-UniRule"/>
</dbReference>
<dbReference type="GO" id="GO:0046933">
    <property type="term" value="F:proton-transporting ATP synthase activity, rotational mechanism"/>
    <property type="evidence" value="ECO:0007669"/>
    <property type="project" value="UniProtKB-UniRule"/>
</dbReference>
<dbReference type="CDD" id="cd12152">
    <property type="entry name" value="F1-ATPase_delta"/>
    <property type="match status" value="1"/>
</dbReference>
<dbReference type="Gene3D" id="1.20.5.440">
    <property type="entry name" value="ATP synthase delta/epsilon subunit, C-terminal domain"/>
    <property type="match status" value="1"/>
</dbReference>
<dbReference type="Gene3D" id="2.60.15.10">
    <property type="entry name" value="F0F1 ATP synthase delta/epsilon subunit, N-terminal"/>
    <property type="match status" value="1"/>
</dbReference>
<dbReference type="HAMAP" id="MF_00530">
    <property type="entry name" value="ATP_synth_epsil_bac"/>
    <property type="match status" value="1"/>
</dbReference>
<dbReference type="InterPro" id="IPR036794">
    <property type="entry name" value="ATP_F1_dsu/esu_C_sf"/>
</dbReference>
<dbReference type="InterPro" id="IPR001469">
    <property type="entry name" value="ATP_synth_F1_dsu/esu"/>
</dbReference>
<dbReference type="InterPro" id="IPR020546">
    <property type="entry name" value="ATP_synth_F1_dsu/esu_N"/>
</dbReference>
<dbReference type="InterPro" id="IPR020547">
    <property type="entry name" value="ATP_synth_F1_esu_C"/>
</dbReference>
<dbReference type="InterPro" id="IPR036771">
    <property type="entry name" value="ATPsynth_dsu/esu_N"/>
</dbReference>
<dbReference type="NCBIfam" id="TIGR01216">
    <property type="entry name" value="ATP_synt_epsi"/>
    <property type="match status" value="1"/>
</dbReference>
<dbReference type="PANTHER" id="PTHR13822">
    <property type="entry name" value="ATP SYNTHASE DELTA/EPSILON CHAIN"/>
    <property type="match status" value="1"/>
</dbReference>
<dbReference type="PANTHER" id="PTHR13822:SF10">
    <property type="entry name" value="ATP SYNTHASE EPSILON CHAIN, CHLOROPLASTIC"/>
    <property type="match status" value="1"/>
</dbReference>
<dbReference type="Pfam" id="PF00401">
    <property type="entry name" value="ATP-synt_DE"/>
    <property type="match status" value="1"/>
</dbReference>
<dbReference type="Pfam" id="PF02823">
    <property type="entry name" value="ATP-synt_DE_N"/>
    <property type="match status" value="1"/>
</dbReference>
<dbReference type="SUPFAM" id="SSF46604">
    <property type="entry name" value="Epsilon subunit of F1F0-ATP synthase C-terminal domain"/>
    <property type="match status" value="1"/>
</dbReference>
<dbReference type="SUPFAM" id="SSF51344">
    <property type="entry name" value="Epsilon subunit of F1F0-ATP synthase N-terminal domain"/>
    <property type="match status" value="1"/>
</dbReference>
<feature type="chain" id="PRO_1000127837" description="ATP synthase epsilon chain">
    <location>
        <begin position="1"/>
        <end position="134"/>
    </location>
</feature>
<comment type="function">
    <text evidence="1">Produces ATP from ADP in the presence of a proton gradient across the membrane.</text>
</comment>
<comment type="subunit">
    <text evidence="1">F-type ATPases have 2 components, CF(1) - the catalytic core - and CF(0) - the membrane proton channel. CF(1) has five subunits: alpha(3), beta(3), gamma(1), delta(1), epsilon(1). CF(0) has three main subunits: a, b and c.</text>
</comment>
<comment type="subcellular location">
    <subcellularLocation>
        <location evidence="1">Cell membrane</location>
        <topology evidence="1">Peripheral membrane protein</topology>
    </subcellularLocation>
</comment>
<comment type="similarity">
    <text evidence="1">Belongs to the ATPase epsilon chain family.</text>
</comment>
<reference key="1">
    <citation type="submission" date="2008-05" db="EMBL/GenBank/DDBJ databases">
        <title>Complete genome sequence of Clostridium botulinum E3 str. Alaska E43.</title>
        <authorList>
            <person name="Brinkac L.M."/>
            <person name="Brown J.L."/>
            <person name="Bruce D."/>
            <person name="Detter C."/>
            <person name="Munk C."/>
            <person name="Smith L.A."/>
            <person name="Smith T.J."/>
            <person name="Sutton G."/>
            <person name="Brettin T.S."/>
        </authorList>
    </citation>
    <scope>NUCLEOTIDE SEQUENCE [LARGE SCALE GENOMIC DNA]</scope>
    <source>
        <strain>Alaska E43 / Type E3</strain>
    </source>
</reference>
<name>ATPE_CLOBA</name>
<organism>
    <name type="scientific">Clostridium botulinum (strain Alaska E43 / Type E3)</name>
    <dbReference type="NCBI Taxonomy" id="508767"/>
    <lineage>
        <taxon>Bacteria</taxon>
        <taxon>Bacillati</taxon>
        <taxon>Bacillota</taxon>
        <taxon>Clostridia</taxon>
        <taxon>Eubacteriales</taxon>
        <taxon>Clostridiaceae</taxon>
        <taxon>Clostridium</taxon>
    </lineage>
</organism>